<organism>
    <name type="scientific">Mycobacterium tuberculosis (strain CDC 1551 / Oshkosh)</name>
    <dbReference type="NCBI Taxonomy" id="83331"/>
    <lineage>
        <taxon>Bacteria</taxon>
        <taxon>Bacillati</taxon>
        <taxon>Actinomycetota</taxon>
        <taxon>Actinomycetes</taxon>
        <taxon>Mycobacteriales</taxon>
        <taxon>Mycobacteriaceae</taxon>
        <taxon>Mycobacterium</taxon>
        <taxon>Mycobacterium tuberculosis complex</taxon>
    </lineage>
</organism>
<protein>
    <recommendedName>
        <fullName>Universal stress protein MT2382</fullName>
    </recommendedName>
</protein>
<sequence>MTIVVGYLAGKVGPSALHLAVRVARMHKTSLTVATIVRRHWPTPSLARVDAEYELWSEQLAAASAREAQRYLRRLADGIEVSYHHRAHRSVSAGLLDVVEELEAEVLVLGSFPSGRRARVLIGSTADRLLHSSPVPVAITPRRYRCYTDRLTRLSCGYSATSGSVDVVRRCGHLASRYGVPMRVITFAVRGRTMYPPEVGLHAEASVLEAWAAQARELLEKLRINGVVSEDVVLQVVTGNGWAQALDAADWQDGEILALGTSPFGDVARVFLGSWSGKIIRYSPVPVLVLPG</sequence>
<accession>P9WLB4</accession>
<accession>L0TC63</accession>
<accession>P64995</accession>
<accession>P71893</accession>
<reference key="1">
    <citation type="journal article" date="2002" name="J. Bacteriol.">
        <title>Whole-genome comparison of Mycobacterium tuberculosis clinical and laboratory strains.</title>
        <authorList>
            <person name="Fleischmann R.D."/>
            <person name="Alland D."/>
            <person name="Eisen J.A."/>
            <person name="Carpenter L."/>
            <person name="White O."/>
            <person name="Peterson J.D."/>
            <person name="DeBoy R.T."/>
            <person name="Dodson R.J."/>
            <person name="Gwinn M.L."/>
            <person name="Haft D.H."/>
            <person name="Hickey E.K."/>
            <person name="Kolonay J.F."/>
            <person name="Nelson W.C."/>
            <person name="Umayam L.A."/>
            <person name="Ermolaeva M.D."/>
            <person name="Salzberg S.L."/>
            <person name="Delcher A."/>
            <person name="Utterback T.R."/>
            <person name="Weidman J.F."/>
            <person name="Khouri H.M."/>
            <person name="Gill J."/>
            <person name="Mikula A."/>
            <person name="Bishai W."/>
            <person name="Jacobs W.R. Jr."/>
            <person name="Venter J.C."/>
            <person name="Fraser C.M."/>
        </authorList>
    </citation>
    <scope>NUCLEOTIDE SEQUENCE [LARGE SCALE GENOMIC DNA]</scope>
    <source>
        <strain>CDC 1551 / Oshkosh</strain>
    </source>
</reference>
<name>Y2319_MYCTO</name>
<proteinExistence type="inferred from homology"/>
<keyword id="KW-1185">Reference proteome</keyword>
<dbReference type="EMBL" id="AE000516">
    <property type="protein sequence ID" value="AAK46675.1"/>
    <property type="molecule type" value="Genomic_DNA"/>
</dbReference>
<dbReference type="PIR" id="H70703">
    <property type="entry name" value="H70703"/>
</dbReference>
<dbReference type="RefSeq" id="WP_003411952.1">
    <property type="nucleotide sequence ID" value="NZ_KK341227.1"/>
</dbReference>
<dbReference type="SMR" id="P9WLB4"/>
<dbReference type="KEGG" id="mtc:MT2382"/>
<dbReference type="PATRIC" id="fig|83331.31.peg.2566"/>
<dbReference type="HOGENOM" id="CLU_049301_4_1_11"/>
<dbReference type="Proteomes" id="UP000001020">
    <property type="component" value="Chromosome"/>
</dbReference>
<dbReference type="CDD" id="cd00293">
    <property type="entry name" value="USP-like"/>
    <property type="match status" value="2"/>
</dbReference>
<dbReference type="Gene3D" id="3.40.50.12370">
    <property type="match status" value="1"/>
</dbReference>
<dbReference type="InterPro" id="IPR006015">
    <property type="entry name" value="Universal_stress_UspA"/>
</dbReference>
<dbReference type="InterPro" id="IPR051688">
    <property type="entry name" value="USP_A"/>
</dbReference>
<dbReference type="InterPro" id="IPR006016">
    <property type="entry name" value="UspA"/>
</dbReference>
<dbReference type="PANTHER" id="PTHR43010">
    <property type="entry name" value="UNIVERSAL STRESS PROTEIN SLR1230"/>
    <property type="match status" value="1"/>
</dbReference>
<dbReference type="PANTHER" id="PTHR43010:SF1">
    <property type="entry name" value="USPA DOMAIN-CONTAINING PROTEIN"/>
    <property type="match status" value="1"/>
</dbReference>
<dbReference type="Pfam" id="PF00582">
    <property type="entry name" value="Usp"/>
    <property type="match status" value="2"/>
</dbReference>
<dbReference type="PRINTS" id="PR01438">
    <property type="entry name" value="UNVRSLSTRESS"/>
</dbReference>
<dbReference type="SUPFAM" id="SSF52402">
    <property type="entry name" value="Adenine nucleotide alpha hydrolases-like"/>
    <property type="match status" value="2"/>
</dbReference>
<evidence type="ECO:0000305" key="1"/>
<feature type="chain" id="PRO_0000427508" description="Universal stress protein MT2382">
    <location>
        <begin position="1"/>
        <end position="292"/>
    </location>
</feature>
<gene>
    <name type="ordered locus">MT2382</name>
</gene>
<comment type="similarity">
    <text evidence="1">Belongs to the universal stress protein A family.</text>
</comment>